<sequence>MHCPFCFAVDTKVIDSRLVGEGSSVRRRRQCLVCNERFTTFEVAELVMPRVVKSNDVREPFNEEKLRSGMLRALEKRPVSSDDVEMAINHIKSQLRATGEREVPSKMIGNLVMEQLKKLDKVAYIRFASVYRSFEDIKEFGEEIARLED</sequence>
<keyword id="KW-0067">ATP-binding</keyword>
<keyword id="KW-0238">DNA-binding</keyword>
<keyword id="KW-0479">Metal-binding</keyword>
<keyword id="KW-0547">Nucleotide-binding</keyword>
<keyword id="KW-1185">Reference proteome</keyword>
<keyword id="KW-0678">Repressor</keyword>
<keyword id="KW-0804">Transcription</keyword>
<keyword id="KW-0805">Transcription regulation</keyword>
<keyword id="KW-0862">Zinc</keyword>
<keyword id="KW-0863">Zinc-finger</keyword>
<comment type="function">
    <text evidence="1">Negatively regulates transcription of bacterial ribonucleotide reductase nrd genes and operons by binding to NrdR-boxes.</text>
</comment>
<comment type="cofactor">
    <cofactor evidence="1">
        <name>Zn(2+)</name>
        <dbReference type="ChEBI" id="CHEBI:29105"/>
    </cofactor>
    <text evidence="1">Binds 1 zinc ion.</text>
</comment>
<comment type="similarity">
    <text evidence="1">Belongs to the NrdR family.</text>
</comment>
<gene>
    <name evidence="1" type="primary">nrdR</name>
    <name type="synonym">ybaD</name>
    <name type="ordered locus">Z0514</name>
    <name type="ordered locus">ECs0466</name>
</gene>
<reference key="1">
    <citation type="journal article" date="2001" name="Nature">
        <title>Genome sequence of enterohaemorrhagic Escherichia coli O157:H7.</title>
        <authorList>
            <person name="Perna N.T."/>
            <person name="Plunkett G. III"/>
            <person name="Burland V."/>
            <person name="Mau B."/>
            <person name="Glasner J.D."/>
            <person name="Rose D.J."/>
            <person name="Mayhew G.F."/>
            <person name="Evans P.S."/>
            <person name="Gregor J."/>
            <person name="Kirkpatrick H.A."/>
            <person name="Posfai G."/>
            <person name="Hackett J."/>
            <person name="Klink S."/>
            <person name="Boutin A."/>
            <person name="Shao Y."/>
            <person name="Miller L."/>
            <person name="Grotbeck E.J."/>
            <person name="Davis N.W."/>
            <person name="Lim A."/>
            <person name="Dimalanta E.T."/>
            <person name="Potamousis K."/>
            <person name="Apodaca J."/>
            <person name="Anantharaman T.S."/>
            <person name="Lin J."/>
            <person name="Yen G."/>
            <person name="Schwartz D.C."/>
            <person name="Welch R.A."/>
            <person name="Blattner F.R."/>
        </authorList>
    </citation>
    <scope>NUCLEOTIDE SEQUENCE [LARGE SCALE GENOMIC DNA]</scope>
    <source>
        <strain>O157:H7 / EDL933 / ATCC 700927 / EHEC</strain>
    </source>
</reference>
<reference key="2">
    <citation type="journal article" date="2001" name="DNA Res.">
        <title>Complete genome sequence of enterohemorrhagic Escherichia coli O157:H7 and genomic comparison with a laboratory strain K-12.</title>
        <authorList>
            <person name="Hayashi T."/>
            <person name="Makino K."/>
            <person name="Ohnishi M."/>
            <person name="Kurokawa K."/>
            <person name="Ishii K."/>
            <person name="Yokoyama K."/>
            <person name="Han C.-G."/>
            <person name="Ohtsubo E."/>
            <person name="Nakayama K."/>
            <person name="Murata T."/>
            <person name="Tanaka M."/>
            <person name="Tobe T."/>
            <person name="Iida T."/>
            <person name="Takami H."/>
            <person name="Honda T."/>
            <person name="Sasakawa C."/>
            <person name="Ogasawara N."/>
            <person name="Yasunaga T."/>
            <person name="Kuhara S."/>
            <person name="Shiba T."/>
            <person name="Hattori M."/>
            <person name="Shinagawa H."/>
        </authorList>
    </citation>
    <scope>NUCLEOTIDE SEQUENCE [LARGE SCALE GENOMIC DNA]</scope>
    <source>
        <strain>O157:H7 / Sakai / RIMD 0509952 / EHEC</strain>
    </source>
</reference>
<protein>
    <recommendedName>
        <fullName evidence="1">Transcriptional repressor NrdR</fullName>
    </recommendedName>
</protein>
<organism>
    <name type="scientific">Escherichia coli O157:H7</name>
    <dbReference type="NCBI Taxonomy" id="83334"/>
    <lineage>
        <taxon>Bacteria</taxon>
        <taxon>Pseudomonadati</taxon>
        <taxon>Pseudomonadota</taxon>
        <taxon>Gammaproteobacteria</taxon>
        <taxon>Enterobacterales</taxon>
        <taxon>Enterobacteriaceae</taxon>
        <taxon>Escherichia</taxon>
    </lineage>
</organism>
<name>NRDR_ECO57</name>
<proteinExistence type="inferred from homology"/>
<feature type="chain" id="PRO_0000182297" description="Transcriptional repressor NrdR">
    <location>
        <begin position="1"/>
        <end position="149"/>
    </location>
</feature>
<feature type="domain" description="ATP-cone" evidence="1">
    <location>
        <begin position="49"/>
        <end position="139"/>
    </location>
</feature>
<feature type="zinc finger region" evidence="1">
    <location>
        <begin position="3"/>
        <end position="34"/>
    </location>
</feature>
<dbReference type="EMBL" id="AE005174">
    <property type="protein sequence ID" value="AAG54762.1"/>
    <property type="molecule type" value="Genomic_DNA"/>
</dbReference>
<dbReference type="EMBL" id="BA000007">
    <property type="protein sequence ID" value="BAB33889.1"/>
    <property type="molecule type" value="Genomic_DNA"/>
</dbReference>
<dbReference type="PIR" id="B90687">
    <property type="entry name" value="B90687"/>
</dbReference>
<dbReference type="PIR" id="F85537">
    <property type="entry name" value="F85537"/>
</dbReference>
<dbReference type="RefSeq" id="NP_308493.1">
    <property type="nucleotide sequence ID" value="NC_002695.1"/>
</dbReference>
<dbReference type="RefSeq" id="WP_000543535.1">
    <property type="nucleotide sequence ID" value="NZ_VOAI01000005.1"/>
</dbReference>
<dbReference type="SMR" id="P0A8D2"/>
<dbReference type="STRING" id="155864.Z0514"/>
<dbReference type="GeneID" id="914568"/>
<dbReference type="GeneID" id="93777047"/>
<dbReference type="KEGG" id="ece:Z0514"/>
<dbReference type="KEGG" id="ecs:ECs_0466"/>
<dbReference type="PATRIC" id="fig|386585.9.peg.566"/>
<dbReference type="eggNOG" id="COG1327">
    <property type="taxonomic scope" value="Bacteria"/>
</dbReference>
<dbReference type="HOGENOM" id="CLU_108412_0_0_6"/>
<dbReference type="OMA" id="YRFTTYE"/>
<dbReference type="Proteomes" id="UP000000558">
    <property type="component" value="Chromosome"/>
</dbReference>
<dbReference type="Proteomes" id="UP000002519">
    <property type="component" value="Chromosome"/>
</dbReference>
<dbReference type="GO" id="GO:0005524">
    <property type="term" value="F:ATP binding"/>
    <property type="evidence" value="ECO:0007669"/>
    <property type="project" value="UniProtKB-KW"/>
</dbReference>
<dbReference type="GO" id="GO:0003677">
    <property type="term" value="F:DNA binding"/>
    <property type="evidence" value="ECO:0007669"/>
    <property type="project" value="UniProtKB-KW"/>
</dbReference>
<dbReference type="GO" id="GO:0008270">
    <property type="term" value="F:zinc ion binding"/>
    <property type="evidence" value="ECO:0007669"/>
    <property type="project" value="UniProtKB-UniRule"/>
</dbReference>
<dbReference type="GO" id="GO:0045892">
    <property type="term" value="P:negative regulation of DNA-templated transcription"/>
    <property type="evidence" value="ECO:0007669"/>
    <property type="project" value="UniProtKB-UniRule"/>
</dbReference>
<dbReference type="HAMAP" id="MF_00440">
    <property type="entry name" value="NrdR"/>
    <property type="match status" value="1"/>
</dbReference>
<dbReference type="InterPro" id="IPR005144">
    <property type="entry name" value="ATP-cone_dom"/>
</dbReference>
<dbReference type="InterPro" id="IPR055173">
    <property type="entry name" value="NrdR-like_N"/>
</dbReference>
<dbReference type="InterPro" id="IPR003796">
    <property type="entry name" value="RNR_NrdR-like"/>
</dbReference>
<dbReference type="NCBIfam" id="TIGR00244">
    <property type="entry name" value="transcriptional regulator NrdR"/>
    <property type="match status" value="1"/>
</dbReference>
<dbReference type="PANTHER" id="PTHR30455">
    <property type="entry name" value="TRANSCRIPTIONAL REPRESSOR NRDR"/>
    <property type="match status" value="1"/>
</dbReference>
<dbReference type="PANTHER" id="PTHR30455:SF2">
    <property type="entry name" value="TRANSCRIPTIONAL REPRESSOR NRDR"/>
    <property type="match status" value="1"/>
</dbReference>
<dbReference type="Pfam" id="PF03477">
    <property type="entry name" value="ATP-cone"/>
    <property type="match status" value="1"/>
</dbReference>
<dbReference type="Pfam" id="PF22811">
    <property type="entry name" value="Zn_ribbon_NrdR"/>
    <property type="match status" value="1"/>
</dbReference>
<dbReference type="PROSITE" id="PS51161">
    <property type="entry name" value="ATP_CONE"/>
    <property type="match status" value="1"/>
</dbReference>
<evidence type="ECO:0000255" key="1">
    <source>
        <dbReference type="HAMAP-Rule" id="MF_00440"/>
    </source>
</evidence>
<accession>P0A8D2</accession>
<accession>P25538</accession>